<comment type="function">
    <text evidence="1">Phosphorolytic 3'-5' exoribonuclease that plays an important role in tRNA 3'-end maturation. Removes nucleotide residues following the 3'-CCA terminus of tRNAs; can also add nucleotides to the ends of RNA molecules by using nucleoside diphosphates as substrates, but this may not be physiologically important. Probably plays a role in initiation of 16S rRNA degradation (leading to ribosome degradation) during starvation.</text>
</comment>
<comment type="catalytic activity">
    <reaction evidence="1">
        <text>tRNA(n+1) + phosphate = tRNA(n) + a ribonucleoside 5'-diphosphate</text>
        <dbReference type="Rhea" id="RHEA:10628"/>
        <dbReference type="Rhea" id="RHEA-COMP:17343"/>
        <dbReference type="Rhea" id="RHEA-COMP:17344"/>
        <dbReference type="ChEBI" id="CHEBI:43474"/>
        <dbReference type="ChEBI" id="CHEBI:57930"/>
        <dbReference type="ChEBI" id="CHEBI:173114"/>
        <dbReference type="EC" id="2.7.7.56"/>
    </reaction>
</comment>
<comment type="subunit">
    <text evidence="1">Homohexameric ring arranged as a trimer of dimers.</text>
</comment>
<comment type="similarity">
    <text evidence="1">Belongs to the RNase PH family.</text>
</comment>
<reference key="1">
    <citation type="submission" date="2009-05" db="EMBL/GenBank/DDBJ databases">
        <title>Complete sequence of Tolumonas auensis DSM 9187.</title>
        <authorList>
            <consortium name="US DOE Joint Genome Institute"/>
            <person name="Lucas S."/>
            <person name="Copeland A."/>
            <person name="Lapidus A."/>
            <person name="Glavina del Rio T."/>
            <person name="Tice H."/>
            <person name="Bruce D."/>
            <person name="Goodwin L."/>
            <person name="Pitluck S."/>
            <person name="Chertkov O."/>
            <person name="Brettin T."/>
            <person name="Detter J.C."/>
            <person name="Han C."/>
            <person name="Larimer F."/>
            <person name="Land M."/>
            <person name="Hauser L."/>
            <person name="Kyrpides N."/>
            <person name="Mikhailova N."/>
            <person name="Spring S."/>
            <person name="Beller H."/>
        </authorList>
    </citation>
    <scope>NUCLEOTIDE SEQUENCE [LARGE SCALE GENOMIC DNA]</scope>
    <source>
        <strain>DSM 9187 / NBRC 110442 / TA 4</strain>
    </source>
</reference>
<accession>C4L818</accession>
<dbReference type="EC" id="2.7.7.56" evidence="1"/>
<dbReference type="EMBL" id="CP001616">
    <property type="protein sequence ID" value="ACQ91817.1"/>
    <property type="molecule type" value="Genomic_DNA"/>
</dbReference>
<dbReference type="RefSeq" id="WP_012728416.1">
    <property type="nucleotide sequence ID" value="NC_012691.1"/>
</dbReference>
<dbReference type="SMR" id="C4L818"/>
<dbReference type="STRING" id="595494.Tola_0187"/>
<dbReference type="KEGG" id="tau:Tola_0187"/>
<dbReference type="eggNOG" id="COG0689">
    <property type="taxonomic scope" value="Bacteria"/>
</dbReference>
<dbReference type="HOGENOM" id="CLU_050858_0_0_6"/>
<dbReference type="OrthoDB" id="9802265at2"/>
<dbReference type="Proteomes" id="UP000009073">
    <property type="component" value="Chromosome"/>
</dbReference>
<dbReference type="GO" id="GO:0000175">
    <property type="term" value="F:3'-5'-RNA exonuclease activity"/>
    <property type="evidence" value="ECO:0007669"/>
    <property type="project" value="UniProtKB-UniRule"/>
</dbReference>
<dbReference type="GO" id="GO:0000049">
    <property type="term" value="F:tRNA binding"/>
    <property type="evidence" value="ECO:0007669"/>
    <property type="project" value="UniProtKB-UniRule"/>
</dbReference>
<dbReference type="GO" id="GO:0009022">
    <property type="term" value="F:tRNA nucleotidyltransferase activity"/>
    <property type="evidence" value="ECO:0007669"/>
    <property type="project" value="UniProtKB-UniRule"/>
</dbReference>
<dbReference type="GO" id="GO:0016075">
    <property type="term" value="P:rRNA catabolic process"/>
    <property type="evidence" value="ECO:0007669"/>
    <property type="project" value="UniProtKB-UniRule"/>
</dbReference>
<dbReference type="GO" id="GO:0006364">
    <property type="term" value="P:rRNA processing"/>
    <property type="evidence" value="ECO:0007669"/>
    <property type="project" value="UniProtKB-KW"/>
</dbReference>
<dbReference type="GO" id="GO:0008033">
    <property type="term" value="P:tRNA processing"/>
    <property type="evidence" value="ECO:0007669"/>
    <property type="project" value="UniProtKB-UniRule"/>
</dbReference>
<dbReference type="CDD" id="cd11362">
    <property type="entry name" value="RNase_PH_bact"/>
    <property type="match status" value="1"/>
</dbReference>
<dbReference type="FunFam" id="3.30.230.70:FF:000003">
    <property type="entry name" value="Ribonuclease PH"/>
    <property type="match status" value="1"/>
</dbReference>
<dbReference type="Gene3D" id="3.30.230.70">
    <property type="entry name" value="GHMP Kinase, N-terminal domain"/>
    <property type="match status" value="1"/>
</dbReference>
<dbReference type="HAMAP" id="MF_00564">
    <property type="entry name" value="RNase_PH"/>
    <property type="match status" value="1"/>
</dbReference>
<dbReference type="InterPro" id="IPR001247">
    <property type="entry name" value="ExoRNase_PH_dom1"/>
</dbReference>
<dbReference type="InterPro" id="IPR015847">
    <property type="entry name" value="ExoRNase_PH_dom2"/>
</dbReference>
<dbReference type="InterPro" id="IPR036345">
    <property type="entry name" value="ExoRNase_PH_dom2_sf"/>
</dbReference>
<dbReference type="InterPro" id="IPR027408">
    <property type="entry name" value="PNPase/RNase_PH_dom_sf"/>
</dbReference>
<dbReference type="InterPro" id="IPR020568">
    <property type="entry name" value="Ribosomal_Su5_D2-typ_SF"/>
</dbReference>
<dbReference type="InterPro" id="IPR050080">
    <property type="entry name" value="RNase_PH"/>
</dbReference>
<dbReference type="InterPro" id="IPR002381">
    <property type="entry name" value="RNase_PH_bac-type"/>
</dbReference>
<dbReference type="InterPro" id="IPR018336">
    <property type="entry name" value="RNase_PH_CS"/>
</dbReference>
<dbReference type="NCBIfam" id="TIGR01966">
    <property type="entry name" value="RNasePH"/>
    <property type="match status" value="1"/>
</dbReference>
<dbReference type="PANTHER" id="PTHR11953">
    <property type="entry name" value="EXOSOME COMPLEX COMPONENT"/>
    <property type="match status" value="1"/>
</dbReference>
<dbReference type="PANTHER" id="PTHR11953:SF0">
    <property type="entry name" value="EXOSOME COMPLEX COMPONENT RRP41"/>
    <property type="match status" value="1"/>
</dbReference>
<dbReference type="Pfam" id="PF01138">
    <property type="entry name" value="RNase_PH"/>
    <property type="match status" value="1"/>
</dbReference>
<dbReference type="Pfam" id="PF03725">
    <property type="entry name" value="RNase_PH_C"/>
    <property type="match status" value="1"/>
</dbReference>
<dbReference type="SUPFAM" id="SSF55666">
    <property type="entry name" value="Ribonuclease PH domain 2-like"/>
    <property type="match status" value="1"/>
</dbReference>
<dbReference type="SUPFAM" id="SSF54211">
    <property type="entry name" value="Ribosomal protein S5 domain 2-like"/>
    <property type="match status" value="1"/>
</dbReference>
<dbReference type="PROSITE" id="PS01277">
    <property type="entry name" value="RIBONUCLEASE_PH"/>
    <property type="match status" value="1"/>
</dbReference>
<sequence>MRPSGRTPEQLRPITITRQYTCHAEGSVLVEFGRTKVLCTATVTEGVPRFLKGKGQGWVTAEYGMLPRSTHSRMHREAASGKQGGRTLEIQRLIARSLRAAVDLTKLGENTITVDCDVLQADGGTRTASITGACVALADALNWMLAKGSLKTNPLNFMVAAVSVGIYEGAPVCDLDYDEDSSAETDMNLVMTETGKMIEIQGTAEGEPFSQEELMQLLELGKQGIQQIIQHQRQALA</sequence>
<name>RNPH_TOLAT</name>
<keyword id="KW-0548">Nucleotidyltransferase</keyword>
<keyword id="KW-1185">Reference proteome</keyword>
<keyword id="KW-0694">RNA-binding</keyword>
<keyword id="KW-0698">rRNA processing</keyword>
<keyword id="KW-0808">Transferase</keyword>
<keyword id="KW-0819">tRNA processing</keyword>
<keyword id="KW-0820">tRNA-binding</keyword>
<proteinExistence type="inferred from homology"/>
<evidence type="ECO:0000255" key="1">
    <source>
        <dbReference type="HAMAP-Rule" id="MF_00564"/>
    </source>
</evidence>
<gene>
    <name evidence="1" type="primary">rph</name>
    <name type="ordered locus">Tola_0187</name>
</gene>
<organism>
    <name type="scientific">Tolumonas auensis (strain DSM 9187 / NBRC 110442 / TA 4)</name>
    <dbReference type="NCBI Taxonomy" id="595494"/>
    <lineage>
        <taxon>Bacteria</taxon>
        <taxon>Pseudomonadati</taxon>
        <taxon>Pseudomonadota</taxon>
        <taxon>Gammaproteobacteria</taxon>
        <taxon>Aeromonadales</taxon>
        <taxon>Aeromonadaceae</taxon>
        <taxon>Tolumonas</taxon>
    </lineage>
</organism>
<feature type="chain" id="PRO_1000212072" description="Ribonuclease PH">
    <location>
        <begin position="1"/>
        <end position="237"/>
    </location>
</feature>
<feature type="binding site" evidence="1">
    <location>
        <position position="86"/>
    </location>
    <ligand>
        <name>phosphate</name>
        <dbReference type="ChEBI" id="CHEBI:43474"/>
        <note>substrate</note>
    </ligand>
</feature>
<feature type="binding site" evidence="1">
    <location>
        <begin position="124"/>
        <end position="126"/>
    </location>
    <ligand>
        <name>phosphate</name>
        <dbReference type="ChEBI" id="CHEBI:43474"/>
        <note>substrate</note>
    </ligand>
</feature>
<protein>
    <recommendedName>
        <fullName evidence="1">Ribonuclease PH</fullName>
        <shortName evidence="1">RNase PH</shortName>
        <ecNumber evidence="1">2.7.7.56</ecNumber>
    </recommendedName>
    <alternativeName>
        <fullName evidence="1">tRNA nucleotidyltransferase</fullName>
    </alternativeName>
</protein>